<evidence type="ECO:0000255" key="1">
    <source>
        <dbReference type="HAMAP-Rule" id="MF_01152"/>
    </source>
</evidence>
<name>DNAJ_RICAE</name>
<accession>C3PMM6</accession>
<feature type="chain" id="PRO_1000213690" description="Chaperone protein DnaJ">
    <location>
        <begin position="1"/>
        <end position="373"/>
    </location>
</feature>
<feature type="domain" description="J" evidence="1">
    <location>
        <begin position="4"/>
        <end position="68"/>
    </location>
</feature>
<feature type="repeat" description="CXXCXGXG motif">
    <location>
        <begin position="149"/>
        <end position="156"/>
    </location>
</feature>
<feature type="repeat" description="CXXCXGXG motif">
    <location>
        <begin position="166"/>
        <end position="173"/>
    </location>
</feature>
<feature type="repeat" description="CXXCXGXG motif">
    <location>
        <begin position="188"/>
        <end position="195"/>
    </location>
</feature>
<feature type="repeat" description="CXXCXGXG motif">
    <location>
        <begin position="202"/>
        <end position="209"/>
    </location>
</feature>
<feature type="zinc finger region" description="CR-type" evidence="1">
    <location>
        <begin position="136"/>
        <end position="214"/>
    </location>
</feature>
<feature type="binding site" evidence="1">
    <location>
        <position position="149"/>
    </location>
    <ligand>
        <name>Zn(2+)</name>
        <dbReference type="ChEBI" id="CHEBI:29105"/>
        <label>1</label>
    </ligand>
</feature>
<feature type="binding site" evidence="1">
    <location>
        <position position="152"/>
    </location>
    <ligand>
        <name>Zn(2+)</name>
        <dbReference type="ChEBI" id="CHEBI:29105"/>
        <label>1</label>
    </ligand>
</feature>
<feature type="binding site" evidence="1">
    <location>
        <position position="166"/>
    </location>
    <ligand>
        <name>Zn(2+)</name>
        <dbReference type="ChEBI" id="CHEBI:29105"/>
        <label>2</label>
    </ligand>
</feature>
<feature type="binding site" evidence="1">
    <location>
        <position position="169"/>
    </location>
    <ligand>
        <name>Zn(2+)</name>
        <dbReference type="ChEBI" id="CHEBI:29105"/>
        <label>2</label>
    </ligand>
</feature>
<feature type="binding site" evidence="1">
    <location>
        <position position="188"/>
    </location>
    <ligand>
        <name>Zn(2+)</name>
        <dbReference type="ChEBI" id="CHEBI:29105"/>
        <label>2</label>
    </ligand>
</feature>
<feature type="binding site" evidence="1">
    <location>
        <position position="191"/>
    </location>
    <ligand>
        <name>Zn(2+)</name>
        <dbReference type="ChEBI" id="CHEBI:29105"/>
        <label>2</label>
    </ligand>
</feature>
<feature type="binding site" evidence="1">
    <location>
        <position position="202"/>
    </location>
    <ligand>
        <name>Zn(2+)</name>
        <dbReference type="ChEBI" id="CHEBI:29105"/>
        <label>1</label>
    </ligand>
</feature>
<feature type="binding site" evidence="1">
    <location>
        <position position="205"/>
    </location>
    <ligand>
        <name>Zn(2+)</name>
        <dbReference type="ChEBI" id="CHEBI:29105"/>
        <label>1</label>
    </ligand>
</feature>
<dbReference type="EMBL" id="CP001612">
    <property type="protein sequence ID" value="ACP53186.1"/>
    <property type="molecule type" value="Genomic_DNA"/>
</dbReference>
<dbReference type="RefSeq" id="WP_004996543.1">
    <property type="nucleotide sequence ID" value="NC_012633.1"/>
</dbReference>
<dbReference type="SMR" id="C3PMM6"/>
<dbReference type="GeneID" id="95361940"/>
<dbReference type="KEGG" id="raf:RAF_ORF0224"/>
<dbReference type="HOGENOM" id="CLU_017633_0_7_5"/>
<dbReference type="Proteomes" id="UP000002305">
    <property type="component" value="Chromosome"/>
</dbReference>
<dbReference type="GO" id="GO:0005737">
    <property type="term" value="C:cytoplasm"/>
    <property type="evidence" value="ECO:0007669"/>
    <property type="project" value="UniProtKB-SubCell"/>
</dbReference>
<dbReference type="GO" id="GO:0005524">
    <property type="term" value="F:ATP binding"/>
    <property type="evidence" value="ECO:0007669"/>
    <property type="project" value="InterPro"/>
</dbReference>
<dbReference type="GO" id="GO:0031072">
    <property type="term" value="F:heat shock protein binding"/>
    <property type="evidence" value="ECO:0007669"/>
    <property type="project" value="InterPro"/>
</dbReference>
<dbReference type="GO" id="GO:0051082">
    <property type="term" value="F:unfolded protein binding"/>
    <property type="evidence" value="ECO:0007669"/>
    <property type="project" value="UniProtKB-UniRule"/>
</dbReference>
<dbReference type="GO" id="GO:0008270">
    <property type="term" value="F:zinc ion binding"/>
    <property type="evidence" value="ECO:0007669"/>
    <property type="project" value="UniProtKB-UniRule"/>
</dbReference>
<dbReference type="GO" id="GO:0051085">
    <property type="term" value="P:chaperone cofactor-dependent protein refolding"/>
    <property type="evidence" value="ECO:0007669"/>
    <property type="project" value="TreeGrafter"/>
</dbReference>
<dbReference type="GO" id="GO:0006260">
    <property type="term" value="P:DNA replication"/>
    <property type="evidence" value="ECO:0007669"/>
    <property type="project" value="UniProtKB-KW"/>
</dbReference>
<dbReference type="GO" id="GO:0042026">
    <property type="term" value="P:protein refolding"/>
    <property type="evidence" value="ECO:0007669"/>
    <property type="project" value="TreeGrafter"/>
</dbReference>
<dbReference type="GO" id="GO:0009408">
    <property type="term" value="P:response to heat"/>
    <property type="evidence" value="ECO:0007669"/>
    <property type="project" value="InterPro"/>
</dbReference>
<dbReference type="CDD" id="cd06257">
    <property type="entry name" value="DnaJ"/>
    <property type="match status" value="1"/>
</dbReference>
<dbReference type="CDD" id="cd10747">
    <property type="entry name" value="DnaJ_C"/>
    <property type="match status" value="1"/>
</dbReference>
<dbReference type="CDD" id="cd10719">
    <property type="entry name" value="DnaJ_zf"/>
    <property type="match status" value="1"/>
</dbReference>
<dbReference type="FunFam" id="1.10.287.110:FF:000153">
    <property type="entry name" value="Chaperone protein DnaJ"/>
    <property type="match status" value="1"/>
</dbReference>
<dbReference type="FunFam" id="2.10.230.10:FF:000002">
    <property type="entry name" value="Molecular chaperone DnaJ"/>
    <property type="match status" value="1"/>
</dbReference>
<dbReference type="FunFam" id="2.60.260.20:FF:000004">
    <property type="entry name" value="Molecular chaperone DnaJ"/>
    <property type="match status" value="1"/>
</dbReference>
<dbReference type="Gene3D" id="1.10.287.110">
    <property type="entry name" value="DnaJ domain"/>
    <property type="match status" value="1"/>
</dbReference>
<dbReference type="Gene3D" id="2.10.230.10">
    <property type="entry name" value="Heat shock protein DnaJ, cysteine-rich domain"/>
    <property type="match status" value="1"/>
</dbReference>
<dbReference type="Gene3D" id="2.60.260.20">
    <property type="entry name" value="Urease metallochaperone UreE, N-terminal domain"/>
    <property type="match status" value="2"/>
</dbReference>
<dbReference type="HAMAP" id="MF_01152">
    <property type="entry name" value="DnaJ"/>
    <property type="match status" value="1"/>
</dbReference>
<dbReference type="InterPro" id="IPR012724">
    <property type="entry name" value="DnaJ"/>
</dbReference>
<dbReference type="InterPro" id="IPR002939">
    <property type="entry name" value="DnaJ_C"/>
</dbReference>
<dbReference type="InterPro" id="IPR001623">
    <property type="entry name" value="DnaJ_domain"/>
</dbReference>
<dbReference type="InterPro" id="IPR018253">
    <property type="entry name" value="DnaJ_domain_CS"/>
</dbReference>
<dbReference type="InterPro" id="IPR008971">
    <property type="entry name" value="HSP40/DnaJ_pept-bd"/>
</dbReference>
<dbReference type="InterPro" id="IPR001305">
    <property type="entry name" value="HSP_DnaJ_Cys-rich_dom"/>
</dbReference>
<dbReference type="InterPro" id="IPR036410">
    <property type="entry name" value="HSP_DnaJ_Cys-rich_dom_sf"/>
</dbReference>
<dbReference type="InterPro" id="IPR036869">
    <property type="entry name" value="J_dom_sf"/>
</dbReference>
<dbReference type="NCBIfam" id="TIGR02349">
    <property type="entry name" value="DnaJ_bact"/>
    <property type="match status" value="1"/>
</dbReference>
<dbReference type="NCBIfam" id="NF008035">
    <property type="entry name" value="PRK10767.1"/>
    <property type="match status" value="1"/>
</dbReference>
<dbReference type="NCBIfam" id="NF010893">
    <property type="entry name" value="PRK14300.1"/>
    <property type="match status" value="1"/>
</dbReference>
<dbReference type="PANTHER" id="PTHR43096">
    <property type="entry name" value="DNAJ HOMOLOG 1, MITOCHONDRIAL-RELATED"/>
    <property type="match status" value="1"/>
</dbReference>
<dbReference type="PANTHER" id="PTHR43096:SF52">
    <property type="entry name" value="DNAJ HOMOLOG 1, MITOCHONDRIAL-RELATED"/>
    <property type="match status" value="1"/>
</dbReference>
<dbReference type="Pfam" id="PF00226">
    <property type="entry name" value="DnaJ"/>
    <property type="match status" value="1"/>
</dbReference>
<dbReference type="Pfam" id="PF01556">
    <property type="entry name" value="DnaJ_C"/>
    <property type="match status" value="1"/>
</dbReference>
<dbReference type="Pfam" id="PF00684">
    <property type="entry name" value="DnaJ_CXXCXGXG"/>
    <property type="match status" value="1"/>
</dbReference>
<dbReference type="PRINTS" id="PR00625">
    <property type="entry name" value="JDOMAIN"/>
</dbReference>
<dbReference type="SMART" id="SM00271">
    <property type="entry name" value="DnaJ"/>
    <property type="match status" value="1"/>
</dbReference>
<dbReference type="SUPFAM" id="SSF46565">
    <property type="entry name" value="Chaperone J-domain"/>
    <property type="match status" value="1"/>
</dbReference>
<dbReference type="SUPFAM" id="SSF57938">
    <property type="entry name" value="DnaJ/Hsp40 cysteine-rich domain"/>
    <property type="match status" value="1"/>
</dbReference>
<dbReference type="SUPFAM" id="SSF49493">
    <property type="entry name" value="HSP40/DnaJ peptide-binding domain"/>
    <property type="match status" value="2"/>
</dbReference>
<dbReference type="PROSITE" id="PS00636">
    <property type="entry name" value="DNAJ_1"/>
    <property type="match status" value="1"/>
</dbReference>
<dbReference type="PROSITE" id="PS50076">
    <property type="entry name" value="DNAJ_2"/>
    <property type="match status" value="1"/>
</dbReference>
<dbReference type="PROSITE" id="PS51188">
    <property type="entry name" value="ZF_CR"/>
    <property type="match status" value="1"/>
</dbReference>
<gene>
    <name evidence="1" type="primary">dnaJ</name>
    <name type="ordered locus">RAF_ORF0224</name>
</gene>
<protein>
    <recommendedName>
        <fullName evidence="1">Chaperone protein DnaJ</fullName>
    </recommendedName>
</protein>
<proteinExistence type="inferred from homology"/>
<reference key="1">
    <citation type="journal article" date="2009" name="BMC Genomics">
        <title>Analysis of the Rickettsia africae genome reveals that virulence acquisition in Rickettsia species may be explained by genome reduction.</title>
        <authorList>
            <person name="Fournier P.-E."/>
            <person name="El Karkouri K."/>
            <person name="Leroy Q."/>
            <person name="Robert C."/>
            <person name="Giumelli B."/>
            <person name="Renesto P."/>
            <person name="Socolovschi C."/>
            <person name="Parola P."/>
            <person name="Audic S."/>
            <person name="Raoult D."/>
        </authorList>
    </citation>
    <scope>NUCLEOTIDE SEQUENCE [LARGE SCALE GENOMIC DNA]</scope>
    <source>
        <strain>ESF-5</strain>
    </source>
</reference>
<keyword id="KW-0143">Chaperone</keyword>
<keyword id="KW-0963">Cytoplasm</keyword>
<keyword id="KW-0235">DNA replication</keyword>
<keyword id="KW-0479">Metal-binding</keyword>
<keyword id="KW-0677">Repeat</keyword>
<keyword id="KW-0346">Stress response</keyword>
<keyword id="KW-0862">Zinc</keyword>
<keyword id="KW-0863">Zinc-finger</keyword>
<comment type="function">
    <text evidence="1">Participates actively in the response to hyperosmotic and heat shock by preventing the aggregation of stress-denatured proteins and by disaggregating proteins, also in an autonomous, DnaK-independent fashion. Unfolded proteins bind initially to DnaJ; upon interaction with the DnaJ-bound protein, DnaK hydrolyzes its bound ATP, resulting in the formation of a stable complex. GrpE releases ADP from DnaK; ATP binding to DnaK triggers the release of the substrate protein, thus completing the reaction cycle. Several rounds of ATP-dependent interactions between DnaJ, DnaK and GrpE are required for fully efficient folding. Also involved, together with DnaK and GrpE, in the DNA replication of plasmids through activation of initiation proteins.</text>
</comment>
<comment type="cofactor">
    <cofactor evidence="1">
        <name>Zn(2+)</name>
        <dbReference type="ChEBI" id="CHEBI:29105"/>
    </cofactor>
    <text evidence="1">Binds 2 Zn(2+) ions per monomer.</text>
</comment>
<comment type="subunit">
    <text evidence="1">Homodimer.</text>
</comment>
<comment type="subcellular location">
    <subcellularLocation>
        <location evidence="1">Cytoplasm</location>
    </subcellularLocation>
</comment>
<comment type="domain">
    <text evidence="1">The J domain is necessary and sufficient to stimulate DnaK ATPase activity. Zinc center 1 plays an important role in the autonomous, DnaK-independent chaperone activity of DnaJ. Zinc center 2 is essential for interaction with DnaK and for DnaJ activity.</text>
</comment>
<comment type="similarity">
    <text evidence="1">Belongs to the DnaJ family.</text>
</comment>
<sequence length="373" mass="41131">MSQNYYQILGVSKTASQADLKKAYLKLAKQYHPDTTDAKDAEKKFKEINAAYDVLKDEQKRAAYDRLGHDAFQNQQSRGGGGNHGGFHPDINDIFGDFFSDFMGGSRRSSRPTSAKVRGSDLKYNLTINLEEAFHGIEKNISFSSAVKCDTCHGSGSEKGETVTTCDACSGVGATRMQQGFFTIEQACHKCQGNGHIIKNPCKKCHGMGRYHKQRNLSVNIPAGVENGTRIRHTGEGEAGIRGGNSGDLYVDITIKPHDIYKVDGANLHCKLPISFVNAALGGEIEVPVIEGGKVNLTIPAGTQNGDQLRLRSKGMSKMRSTIRGDMLTHIHVEVPKNLSKRQRELLEEFKKESINEKENDGSFFNKMKSLWS</sequence>
<organism>
    <name type="scientific">Rickettsia africae (strain ESF-5)</name>
    <dbReference type="NCBI Taxonomy" id="347255"/>
    <lineage>
        <taxon>Bacteria</taxon>
        <taxon>Pseudomonadati</taxon>
        <taxon>Pseudomonadota</taxon>
        <taxon>Alphaproteobacteria</taxon>
        <taxon>Rickettsiales</taxon>
        <taxon>Rickettsiaceae</taxon>
        <taxon>Rickettsieae</taxon>
        <taxon>Rickettsia</taxon>
        <taxon>spotted fever group</taxon>
    </lineage>
</organism>